<gene>
    <name evidence="1" type="primary">infC</name>
    <name type="ordered locus">PA2743</name>
</gene>
<protein>
    <recommendedName>
        <fullName evidence="1">Translation initiation factor IF-3</fullName>
    </recommendedName>
</protein>
<reference key="1">
    <citation type="journal article" date="2000" name="Nature">
        <title>Complete genome sequence of Pseudomonas aeruginosa PAO1, an opportunistic pathogen.</title>
        <authorList>
            <person name="Stover C.K."/>
            <person name="Pham X.-Q.T."/>
            <person name="Erwin A.L."/>
            <person name="Mizoguchi S.D."/>
            <person name="Warrener P."/>
            <person name="Hickey M.J."/>
            <person name="Brinkman F.S.L."/>
            <person name="Hufnagle W.O."/>
            <person name="Kowalik D.J."/>
            <person name="Lagrou M."/>
            <person name="Garber R.L."/>
            <person name="Goltry L."/>
            <person name="Tolentino E."/>
            <person name="Westbrock-Wadman S."/>
            <person name="Yuan Y."/>
            <person name="Brody L.L."/>
            <person name="Coulter S.N."/>
            <person name="Folger K.R."/>
            <person name="Kas A."/>
            <person name="Larbig K."/>
            <person name="Lim R.M."/>
            <person name="Smith K.A."/>
            <person name="Spencer D.H."/>
            <person name="Wong G.K.-S."/>
            <person name="Wu Z."/>
            <person name="Paulsen I.T."/>
            <person name="Reizer J."/>
            <person name="Saier M.H. Jr."/>
            <person name="Hancock R.E.W."/>
            <person name="Lory S."/>
            <person name="Olson M.V."/>
        </authorList>
    </citation>
    <scope>NUCLEOTIDE SEQUENCE [LARGE SCALE GENOMIC DNA]</scope>
    <source>
        <strain>ATCC 15692 / DSM 22644 / CIP 104116 / JCM 14847 / LMG 12228 / 1C / PRS 101 / PAO1</strain>
    </source>
</reference>
<accession>Q9I0A0</accession>
<evidence type="ECO:0000255" key="1">
    <source>
        <dbReference type="HAMAP-Rule" id="MF_00080"/>
    </source>
</evidence>
<evidence type="ECO:0007829" key="2">
    <source>
        <dbReference type="PDB" id="6VRJ"/>
    </source>
</evidence>
<feature type="chain" id="PRO_0000177557" description="Translation initiation factor IF-3">
    <location>
        <begin position="1"/>
        <end position="183"/>
    </location>
</feature>
<feature type="strand" evidence="2">
    <location>
        <begin position="89"/>
        <end position="93"/>
    </location>
</feature>
<feature type="strand" evidence="2">
    <location>
        <begin position="98"/>
        <end position="102"/>
    </location>
</feature>
<feature type="helix" evidence="2">
    <location>
        <begin position="108"/>
        <end position="124"/>
    </location>
</feature>
<feature type="strand" evidence="2">
    <location>
        <begin position="128"/>
        <end position="132"/>
    </location>
</feature>
<feature type="helix" evidence="2">
    <location>
        <begin position="138"/>
        <end position="157"/>
    </location>
</feature>
<feature type="strand" evidence="2">
    <location>
        <begin position="160"/>
        <end position="169"/>
    </location>
</feature>
<feature type="strand" evidence="2">
    <location>
        <begin position="172"/>
        <end position="180"/>
    </location>
</feature>
<sequence length="183" mass="20882">MIIKREMRQDKRAQPKPPINENISAREVRLIGADGQQVGVVSIDEAIRLAEEAKLDLVEISADAVPPVCRIMDYGKHLFEKKKQAAVAKKNQKQAQVKEIKFRPGTEEGDYQVKLRNLVRFLSEGDKAKVSLRFRGREMAHQELGMELLKRVEADLVEYGTVEQHPKLEGRQLMMVIAPKKKK</sequence>
<proteinExistence type="evidence at protein level"/>
<organism>
    <name type="scientific">Pseudomonas aeruginosa (strain ATCC 15692 / DSM 22644 / CIP 104116 / JCM 14847 / LMG 12228 / 1C / PRS 101 / PAO1)</name>
    <dbReference type="NCBI Taxonomy" id="208964"/>
    <lineage>
        <taxon>Bacteria</taxon>
        <taxon>Pseudomonadati</taxon>
        <taxon>Pseudomonadota</taxon>
        <taxon>Gammaproteobacteria</taxon>
        <taxon>Pseudomonadales</taxon>
        <taxon>Pseudomonadaceae</taxon>
        <taxon>Pseudomonas</taxon>
    </lineage>
</organism>
<comment type="function">
    <text evidence="1">IF-3 binds to the 30S ribosomal subunit and shifts the equilibrium between 70S ribosomes and their 50S and 30S subunits in favor of the free subunits, thus enhancing the availability of 30S subunits on which protein synthesis initiation begins.</text>
</comment>
<comment type="subunit">
    <text evidence="1">Monomer.</text>
</comment>
<comment type="subcellular location">
    <subcellularLocation>
        <location evidence="1">Cytoplasm</location>
    </subcellularLocation>
</comment>
<comment type="similarity">
    <text evidence="1">Belongs to the IF-3 family.</text>
</comment>
<dbReference type="EMBL" id="AE004091">
    <property type="protein sequence ID" value="AAG06131.1"/>
    <property type="molecule type" value="Genomic_DNA"/>
</dbReference>
<dbReference type="PIR" id="E83303">
    <property type="entry name" value="E83303"/>
</dbReference>
<dbReference type="RefSeq" id="NP_251433.1">
    <property type="nucleotide sequence ID" value="NC_002516.2"/>
</dbReference>
<dbReference type="RefSeq" id="WP_003119938.1">
    <property type="nucleotide sequence ID" value="NZ_QZGE01000011.1"/>
</dbReference>
<dbReference type="PDB" id="6VRJ">
    <property type="method" value="NMR"/>
    <property type="chains" value="A=87-183"/>
</dbReference>
<dbReference type="PDBsum" id="6VRJ"/>
<dbReference type="SMR" id="Q9I0A0"/>
<dbReference type="FunCoup" id="Q9I0A0">
    <property type="interactions" value="672"/>
</dbReference>
<dbReference type="STRING" id="208964.PA2743"/>
<dbReference type="PaxDb" id="208964-PA2743"/>
<dbReference type="DNASU" id="879427"/>
<dbReference type="GeneID" id="879427"/>
<dbReference type="KEGG" id="pae:PA2743"/>
<dbReference type="PATRIC" id="fig|208964.12.peg.2868"/>
<dbReference type="PseudoCAP" id="PA2743"/>
<dbReference type="HOGENOM" id="CLU_054919_3_2_6"/>
<dbReference type="InParanoid" id="Q9I0A0"/>
<dbReference type="OrthoDB" id="9806014at2"/>
<dbReference type="PhylomeDB" id="Q9I0A0"/>
<dbReference type="BioCyc" id="PAER208964:G1FZ6-2782-MONOMER"/>
<dbReference type="Proteomes" id="UP000002438">
    <property type="component" value="Chromosome"/>
</dbReference>
<dbReference type="GO" id="GO:0005829">
    <property type="term" value="C:cytosol"/>
    <property type="evidence" value="ECO:0000318"/>
    <property type="project" value="GO_Central"/>
</dbReference>
<dbReference type="GO" id="GO:0043022">
    <property type="term" value="F:ribosome binding"/>
    <property type="evidence" value="ECO:0000318"/>
    <property type="project" value="GO_Central"/>
</dbReference>
<dbReference type="GO" id="GO:0003743">
    <property type="term" value="F:translation initiation factor activity"/>
    <property type="evidence" value="ECO:0000318"/>
    <property type="project" value="GO_Central"/>
</dbReference>
<dbReference type="GO" id="GO:0032790">
    <property type="term" value="P:ribosome disassembly"/>
    <property type="evidence" value="ECO:0000318"/>
    <property type="project" value="GO_Central"/>
</dbReference>
<dbReference type="FunFam" id="3.10.20.80:FF:000001">
    <property type="entry name" value="Translation initiation factor IF-3"/>
    <property type="match status" value="1"/>
</dbReference>
<dbReference type="FunFam" id="3.30.110.10:FF:000001">
    <property type="entry name" value="Translation initiation factor IF-3"/>
    <property type="match status" value="1"/>
</dbReference>
<dbReference type="Gene3D" id="3.30.110.10">
    <property type="entry name" value="Translation initiation factor 3 (IF-3), C-terminal domain"/>
    <property type="match status" value="1"/>
</dbReference>
<dbReference type="Gene3D" id="3.10.20.80">
    <property type="entry name" value="Translation initiation factor 3 (IF-3), N-terminal domain"/>
    <property type="match status" value="1"/>
</dbReference>
<dbReference type="HAMAP" id="MF_00080">
    <property type="entry name" value="IF_3"/>
    <property type="match status" value="1"/>
</dbReference>
<dbReference type="InterPro" id="IPR036788">
    <property type="entry name" value="T_IF-3_C_sf"/>
</dbReference>
<dbReference type="InterPro" id="IPR036787">
    <property type="entry name" value="T_IF-3_N_sf"/>
</dbReference>
<dbReference type="InterPro" id="IPR001288">
    <property type="entry name" value="Translation_initiation_fac_3"/>
</dbReference>
<dbReference type="InterPro" id="IPR019815">
    <property type="entry name" value="Translation_initiation_fac_3_C"/>
</dbReference>
<dbReference type="InterPro" id="IPR019814">
    <property type="entry name" value="Translation_initiation_fac_3_N"/>
</dbReference>
<dbReference type="NCBIfam" id="TIGR00168">
    <property type="entry name" value="infC"/>
    <property type="match status" value="1"/>
</dbReference>
<dbReference type="PANTHER" id="PTHR10938">
    <property type="entry name" value="TRANSLATION INITIATION FACTOR IF-3"/>
    <property type="match status" value="1"/>
</dbReference>
<dbReference type="PANTHER" id="PTHR10938:SF0">
    <property type="entry name" value="TRANSLATION INITIATION FACTOR IF-3, MITOCHONDRIAL"/>
    <property type="match status" value="1"/>
</dbReference>
<dbReference type="Pfam" id="PF00707">
    <property type="entry name" value="IF3_C"/>
    <property type="match status" value="1"/>
</dbReference>
<dbReference type="Pfam" id="PF05198">
    <property type="entry name" value="IF3_N"/>
    <property type="match status" value="1"/>
</dbReference>
<dbReference type="SUPFAM" id="SSF55200">
    <property type="entry name" value="Translation initiation factor IF3, C-terminal domain"/>
    <property type="match status" value="1"/>
</dbReference>
<dbReference type="SUPFAM" id="SSF54364">
    <property type="entry name" value="Translation initiation factor IF3, N-terminal domain"/>
    <property type="match status" value="1"/>
</dbReference>
<name>IF3_PSEAE</name>
<keyword id="KW-0002">3D-structure</keyword>
<keyword id="KW-0963">Cytoplasm</keyword>
<keyword id="KW-0396">Initiation factor</keyword>
<keyword id="KW-0648">Protein biosynthesis</keyword>
<keyword id="KW-1185">Reference proteome</keyword>